<name>CYB_BRANP</name>
<evidence type="ECO:0000250" key="1"/>
<evidence type="ECO:0000250" key="2">
    <source>
        <dbReference type="UniProtKB" id="P00157"/>
    </source>
</evidence>
<evidence type="ECO:0000255" key="3">
    <source>
        <dbReference type="PROSITE-ProRule" id="PRU00967"/>
    </source>
</evidence>
<evidence type="ECO:0000255" key="4">
    <source>
        <dbReference type="PROSITE-ProRule" id="PRU00968"/>
    </source>
</evidence>
<gene>
    <name type="primary">MT-CYB</name>
    <name type="synonym">COB</name>
    <name type="synonym">CYTB</name>
    <name type="synonym">MTCYB</name>
</gene>
<keyword id="KW-0249">Electron transport</keyword>
<keyword id="KW-0349">Heme</keyword>
<keyword id="KW-0408">Iron</keyword>
<keyword id="KW-0472">Membrane</keyword>
<keyword id="KW-0479">Metal-binding</keyword>
<keyword id="KW-0496">Mitochondrion</keyword>
<keyword id="KW-0999">Mitochondrion inner membrane</keyword>
<keyword id="KW-0679">Respiratory chain</keyword>
<keyword id="KW-0812">Transmembrane</keyword>
<keyword id="KW-1133">Transmembrane helix</keyword>
<keyword id="KW-0813">Transport</keyword>
<keyword id="KW-0830">Ubiquinone</keyword>
<comment type="function">
    <text evidence="2">Component of the ubiquinol-cytochrome c reductase complex (complex III or cytochrome b-c1 complex) that is part of the mitochondrial respiratory chain. The b-c1 complex mediates electron transfer from ubiquinol to cytochrome c. Contributes to the generation of a proton gradient across the mitochondrial membrane that is then used for ATP synthesis.</text>
</comment>
<comment type="cofactor">
    <cofactor evidence="2">
        <name>heme b</name>
        <dbReference type="ChEBI" id="CHEBI:60344"/>
    </cofactor>
    <text evidence="2">Binds 2 heme b groups non-covalently.</text>
</comment>
<comment type="subunit">
    <text evidence="2">The cytochrome bc1 complex contains 11 subunits: 3 respiratory subunits (MT-CYB, CYC1 and UQCRFS1), 2 core proteins (UQCRC1 and UQCRC2) and 6 low-molecular weight proteins (UQCRH/QCR6, UQCRB/QCR7, UQCRQ/QCR8, UQCR10/QCR9, UQCR11/QCR10 and a cleavage product of UQCRFS1). This cytochrome bc1 complex then forms a dimer.</text>
</comment>
<comment type="subcellular location">
    <subcellularLocation>
        <location evidence="2">Mitochondrion inner membrane</location>
        <topology evidence="2">Multi-pass membrane protein</topology>
    </subcellularLocation>
</comment>
<comment type="miscellaneous">
    <text evidence="1">Heme 1 (or BL or b562) is low-potential and absorbs at about 562 nm, and heme 2 (or BH or b566) is high-potential and absorbs at about 566 nm.</text>
</comment>
<comment type="similarity">
    <text evidence="3 4">Belongs to the cytochrome b family.</text>
</comment>
<comment type="caution">
    <text evidence="2">The full-length protein contains only eight transmembrane helices, not nine as predicted by bioinformatics tools.</text>
</comment>
<organism>
    <name type="scientific">Brachyphylla nana pumila</name>
    <name type="common">Fruit eating bat</name>
    <name type="synonym">Brachyphylla pumila</name>
    <dbReference type="NCBI Taxonomy" id="290571"/>
    <lineage>
        <taxon>Eukaryota</taxon>
        <taxon>Metazoa</taxon>
        <taxon>Chordata</taxon>
        <taxon>Craniata</taxon>
        <taxon>Vertebrata</taxon>
        <taxon>Euteleostomi</taxon>
        <taxon>Mammalia</taxon>
        <taxon>Eutheria</taxon>
        <taxon>Laurasiatheria</taxon>
        <taxon>Chiroptera</taxon>
        <taxon>Yangochiroptera</taxon>
        <taxon>Phyllostomidae</taxon>
        <taxon>Brachyphyllinae</taxon>
        <taxon>Brachyphylla</taxon>
    </lineage>
</organism>
<proteinExistence type="inferred from homology"/>
<dbReference type="EMBL" id="AY620446">
    <property type="protein sequence ID" value="AAU04705.1"/>
    <property type="molecule type" value="Genomic_DNA"/>
</dbReference>
<dbReference type="EMBL" id="AY620447">
    <property type="protein sequence ID" value="AAU04706.1"/>
    <property type="molecule type" value="Genomic_DNA"/>
</dbReference>
<dbReference type="EMBL" id="AY620448">
    <property type="protein sequence ID" value="AAU04707.1"/>
    <property type="molecule type" value="Genomic_DNA"/>
</dbReference>
<dbReference type="EMBL" id="AY620449">
    <property type="protein sequence ID" value="AAU04708.1"/>
    <property type="molecule type" value="Genomic_DNA"/>
</dbReference>
<dbReference type="EMBL" id="AY620450">
    <property type="protein sequence ID" value="AAU04709.1"/>
    <property type="molecule type" value="Genomic_DNA"/>
</dbReference>
<dbReference type="SMR" id="Q4VUY0"/>
<dbReference type="GO" id="GO:0005743">
    <property type="term" value="C:mitochondrial inner membrane"/>
    <property type="evidence" value="ECO:0007669"/>
    <property type="project" value="UniProtKB-SubCell"/>
</dbReference>
<dbReference type="GO" id="GO:0045275">
    <property type="term" value="C:respiratory chain complex III"/>
    <property type="evidence" value="ECO:0007669"/>
    <property type="project" value="InterPro"/>
</dbReference>
<dbReference type="GO" id="GO:0046872">
    <property type="term" value="F:metal ion binding"/>
    <property type="evidence" value="ECO:0007669"/>
    <property type="project" value="UniProtKB-KW"/>
</dbReference>
<dbReference type="GO" id="GO:0008121">
    <property type="term" value="F:ubiquinol-cytochrome-c reductase activity"/>
    <property type="evidence" value="ECO:0007669"/>
    <property type="project" value="InterPro"/>
</dbReference>
<dbReference type="GO" id="GO:0006122">
    <property type="term" value="P:mitochondrial electron transport, ubiquinol to cytochrome c"/>
    <property type="evidence" value="ECO:0007669"/>
    <property type="project" value="TreeGrafter"/>
</dbReference>
<dbReference type="CDD" id="cd00290">
    <property type="entry name" value="cytochrome_b_C"/>
    <property type="match status" value="1"/>
</dbReference>
<dbReference type="CDD" id="cd00284">
    <property type="entry name" value="Cytochrome_b_N"/>
    <property type="match status" value="1"/>
</dbReference>
<dbReference type="FunFam" id="1.20.810.10:FF:000002">
    <property type="entry name" value="Cytochrome b"/>
    <property type="match status" value="1"/>
</dbReference>
<dbReference type="Gene3D" id="1.20.810.10">
    <property type="entry name" value="Cytochrome Bc1 Complex, Chain C"/>
    <property type="match status" value="1"/>
</dbReference>
<dbReference type="InterPro" id="IPR005798">
    <property type="entry name" value="Cyt_b/b6_C"/>
</dbReference>
<dbReference type="InterPro" id="IPR036150">
    <property type="entry name" value="Cyt_b/b6_C_sf"/>
</dbReference>
<dbReference type="InterPro" id="IPR005797">
    <property type="entry name" value="Cyt_b/b6_N"/>
</dbReference>
<dbReference type="InterPro" id="IPR027387">
    <property type="entry name" value="Cytb/b6-like_sf"/>
</dbReference>
<dbReference type="InterPro" id="IPR030689">
    <property type="entry name" value="Cytochrome_b"/>
</dbReference>
<dbReference type="InterPro" id="IPR048260">
    <property type="entry name" value="Cytochrome_b_C_euk/bac"/>
</dbReference>
<dbReference type="InterPro" id="IPR048259">
    <property type="entry name" value="Cytochrome_b_N_euk/bac"/>
</dbReference>
<dbReference type="InterPro" id="IPR016174">
    <property type="entry name" value="Di-haem_cyt_TM"/>
</dbReference>
<dbReference type="PANTHER" id="PTHR19271">
    <property type="entry name" value="CYTOCHROME B"/>
    <property type="match status" value="1"/>
</dbReference>
<dbReference type="PANTHER" id="PTHR19271:SF16">
    <property type="entry name" value="CYTOCHROME B"/>
    <property type="match status" value="1"/>
</dbReference>
<dbReference type="Pfam" id="PF00032">
    <property type="entry name" value="Cytochrom_B_C"/>
    <property type="match status" value="1"/>
</dbReference>
<dbReference type="Pfam" id="PF00033">
    <property type="entry name" value="Cytochrome_B"/>
    <property type="match status" value="1"/>
</dbReference>
<dbReference type="PIRSF" id="PIRSF038885">
    <property type="entry name" value="COB"/>
    <property type="match status" value="1"/>
</dbReference>
<dbReference type="SUPFAM" id="SSF81648">
    <property type="entry name" value="a domain/subunit of cytochrome bc1 complex (Ubiquinol-cytochrome c reductase)"/>
    <property type="match status" value="1"/>
</dbReference>
<dbReference type="SUPFAM" id="SSF81342">
    <property type="entry name" value="Transmembrane di-heme cytochromes"/>
    <property type="match status" value="1"/>
</dbReference>
<dbReference type="PROSITE" id="PS51003">
    <property type="entry name" value="CYTB_CTER"/>
    <property type="match status" value="1"/>
</dbReference>
<dbReference type="PROSITE" id="PS51002">
    <property type="entry name" value="CYTB_NTER"/>
    <property type="match status" value="1"/>
</dbReference>
<protein>
    <recommendedName>
        <fullName>Cytochrome b</fullName>
    </recommendedName>
    <alternativeName>
        <fullName>Complex III subunit 3</fullName>
    </alternativeName>
    <alternativeName>
        <fullName>Complex III subunit III</fullName>
    </alternativeName>
    <alternativeName>
        <fullName>Cytochrome b-c1 complex subunit 3</fullName>
    </alternativeName>
    <alternativeName>
        <fullName>Ubiquinol-cytochrome-c reductase complex cytochrome b subunit</fullName>
    </alternativeName>
</protein>
<sequence>MTNIRKTHPLLKIINSSFVDLPAPSSLSSWWNFGSLLAACLAVQILTGLFLAMHYTSDTATAFDSVAHICRDVNYGWTLRYLHANGASMFFICLYLHVGRGLYYGSYTYSETWNVGILLLFAVMATAFMGYVLPWGQMSFWGATVITNLLSAIPYIGTDLVQWIWGGFSVDKATLTRFFAFHFLLPFIVSALVMVHLLFLHETGSNNPTGIPSDPDMIPFHPYYTIKDILGFLIMLTALSALVLFSPDLLGDPDNYTPANPLNTPPHIKPEWYFLFAYAILRSIPNKLGGVLALVMSILILAIVPMLHISKQRSMMFRPLSQCLFWLLVAVLLTLTWIGGQPVEYPYVIIGQVASVLYFLIFLVFMPLVSAMENYLLKW</sequence>
<accession>Q4VUY0</accession>
<geneLocation type="mitochondrion"/>
<feature type="chain" id="PRO_0000254667" description="Cytochrome b">
    <location>
        <begin position="1"/>
        <end position="379"/>
    </location>
</feature>
<feature type="transmembrane region" description="Helical" evidence="2">
    <location>
        <begin position="33"/>
        <end position="53"/>
    </location>
</feature>
<feature type="transmembrane region" description="Helical" evidence="2">
    <location>
        <begin position="77"/>
        <end position="98"/>
    </location>
</feature>
<feature type="transmembrane region" description="Helical" evidence="2">
    <location>
        <begin position="113"/>
        <end position="133"/>
    </location>
</feature>
<feature type="transmembrane region" description="Helical" evidence="2">
    <location>
        <begin position="178"/>
        <end position="198"/>
    </location>
</feature>
<feature type="transmembrane region" description="Helical" evidence="2">
    <location>
        <begin position="226"/>
        <end position="246"/>
    </location>
</feature>
<feature type="transmembrane region" description="Helical" evidence="2">
    <location>
        <begin position="288"/>
        <end position="308"/>
    </location>
</feature>
<feature type="transmembrane region" description="Helical" evidence="2">
    <location>
        <begin position="320"/>
        <end position="340"/>
    </location>
</feature>
<feature type="transmembrane region" description="Helical" evidence="2">
    <location>
        <begin position="347"/>
        <end position="367"/>
    </location>
</feature>
<feature type="binding site" description="axial binding residue" evidence="2">
    <location>
        <position position="83"/>
    </location>
    <ligand>
        <name>heme b</name>
        <dbReference type="ChEBI" id="CHEBI:60344"/>
        <label>b562</label>
    </ligand>
    <ligandPart>
        <name>Fe</name>
        <dbReference type="ChEBI" id="CHEBI:18248"/>
    </ligandPart>
</feature>
<feature type="binding site" description="axial binding residue" evidence="2">
    <location>
        <position position="97"/>
    </location>
    <ligand>
        <name>heme b</name>
        <dbReference type="ChEBI" id="CHEBI:60344"/>
        <label>b566</label>
    </ligand>
    <ligandPart>
        <name>Fe</name>
        <dbReference type="ChEBI" id="CHEBI:18248"/>
    </ligandPart>
</feature>
<feature type="binding site" description="axial binding residue" evidence="2">
    <location>
        <position position="182"/>
    </location>
    <ligand>
        <name>heme b</name>
        <dbReference type="ChEBI" id="CHEBI:60344"/>
        <label>b562</label>
    </ligand>
    <ligandPart>
        <name>Fe</name>
        <dbReference type="ChEBI" id="CHEBI:18248"/>
    </ligandPart>
</feature>
<feature type="binding site" description="axial binding residue" evidence="2">
    <location>
        <position position="196"/>
    </location>
    <ligand>
        <name>heme b</name>
        <dbReference type="ChEBI" id="CHEBI:60344"/>
        <label>b566</label>
    </ligand>
    <ligandPart>
        <name>Fe</name>
        <dbReference type="ChEBI" id="CHEBI:18248"/>
    </ligandPart>
</feature>
<feature type="binding site" evidence="2">
    <location>
        <position position="201"/>
    </location>
    <ligand>
        <name>a ubiquinone</name>
        <dbReference type="ChEBI" id="CHEBI:16389"/>
    </ligand>
</feature>
<reference key="1">
    <citation type="submission" date="2004-05" db="EMBL/GenBank/DDBJ databases">
        <title>Phylogeny of Brachyphylla.</title>
        <authorList>
            <person name="Davalos L.M."/>
        </authorList>
    </citation>
    <scope>NUCLEOTIDE SEQUENCE [GENOMIC DNA]</scope>
</reference>